<evidence type="ECO:0000255" key="1">
    <source>
        <dbReference type="HAMAP-Rule" id="MF_00323"/>
    </source>
</evidence>
<reference key="1">
    <citation type="journal article" date="2009" name="Infect. Immun.">
        <title>Comparative genomics reveal extensive transposon-mediated genomic plasticity and diversity among potential effector proteins within the genus Coxiella.</title>
        <authorList>
            <person name="Beare P.A."/>
            <person name="Unsworth N."/>
            <person name="Andoh M."/>
            <person name="Voth D.E."/>
            <person name="Omsland A."/>
            <person name="Gilk S.D."/>
            <person name="Williams K.P."/>
            <person name="Sobral B.W."/>
            <person name="Kupko J.J. III"/>
            <person name="Porcella S.F."/>
            <person name="Samuel J.E."/>
            <person name="Heinzen R.A."/>
        </authorList>
    </citation>
    <scope>NUCLEOTIDE SEQUENCE [LARGE SCALE GENOMIC DNA]</scope>
    <source>
        <strain>CbuK_Q154</strain>
    </source>
</reference>
<sequence length="354" mass="40496">MAKQAIKRAKILAVKNNNKIGVLLINLGTPDEPSVPAVRRYLRQFLSDPKVIDVPSLVRWIIVHLCILPFRPKRSAKLYQKIWMPEGSPLLVYSEMLRERVGETLGDDFCVALGMRYGKPSIETALKKLQEAQCRQLIVLPLFPQYSTSTTASALEEVRAKNSFKEMTVIDRFFEEPHYIDSMTTLIHENLNEFQPDYFLFSYHGLPERHLVKSGCQLAICNRKNNCSPISSSNENCYRAQCFETSRLIAKKLNLTDQQYGVAFQSRLGRAKWIEPYTDKYLIELSKKGIKKLMVVCPSFPVDCLETLEEIGIRAQSQWQRLGGETLKLIPSLNAHPQWVNAIAKMAKKSLQLF</sequence>
<name>HEMH_COXB1</name>
<keyword id="KW-0963">Cytoplasm</keyword>
<keyword id="KW-0350">Heme biosynthesis</keyword>
<keyword id="KW-0408">Iron</keyword>
<keyword id="KW-0456">Lyase</keyword>
<keyword id="KW-0479">Metal-binding</keyword>
<keyword id="KW-0627">Porphyrin biosynthesis</keyword>
<dbReference type="EC" id="4.98.1.1" evidence="1"/>
<dbReference type="EMBL" id="CP001020">
    <property type="protein sequence ID" value="ACJ21092.1"/>
    <property type="molecule type" value="Genomic_DNA"/>
</dbReference>
<dbReference type="SMR" id="B6J5R6"/>
<dbReference type="KEGG" id="cbc:CbuK_1987"/>
<dbReference type="HOGENOM" id="CLU_018884_0_1_6"/>
<dbReference type="UniPathway" id="UPA00252">
    <property type="reaction ID" value="UER00325"/>
</dbReference>
<dbReference type="GO" id="GO:0005737">
    <property type="term" value="C:cytoplasm"/>
    <property type="evidence" value="ECO:0007669"/>
    <property type="project" value="UniProtKB-SubCell"/>
</dbReference>
<dbReference type="GO" id="GO:0004325">
    <property type="term" value="F:ferrochelatase activity"/>
    <property type="evidence" value="ECO:0007669"/>
    <property type="project" value="UniProtKB-UniRule"/>
</dbReference>
<dbReference type="GO" id="GO:0046872">
    <property type="term" value="F:metal ion binding"/>
    <property type="evidence" value="ECO:0007669"/>
    <property type="project" value="UniProtKB-KW"/>
</dbReference>
<dbReference type="GO" id="GO:0006783">
    <property type="term" value="P:heme biosynthetic process"/>
    <property type="evidence" value="ECO:0007669"/>
    <property type="project" value="UniProtKB-UniRule"/>
</dbReference>
<dbReference type="CDD" id="cd00419">
    <property type="entry name" value="Ferrochelatase_C"/>
    <property type="match status" value="1"/>
</dbReference>
<dbReference type="CDD" id="cd03411">
    <property type="entry name" value="Ferrochelatase_N"/>
    <property type="match status" value="1"/>
</dbReference>
<dbReference type="Gene3D" id="3.40.50.1400">
    <property type="match status" value="2"/>
</dbReference>
<dbReference type="HAMAP" id="MF_00323">
    <property type="entry name" value="Ferrochelatase"/>
    <property type="match status" value="1"/>
</dbReference>
<dbReference type="InterPro" id="IPR001015">
    <property type="entry name" value="Ferrochelatase"/>
</dbReference>
<dbReference type="InterPro" id="IPR019772">
    <property type="entry name" value="Ferrochelatase_AS"/>
</dbReference>
<dbReference type="InterPro" id="IPR033644">
    <property type="entry name" value="Ferrochelatase_C"/>
</dbReference>
<dbReference type="InterPro" id="IPR033659">
    <property type="entry name" value="Ferrochelatase_N"/>
</dbReference>
<dbReference type="NCBIfam" id="TIGR00109">
    <property type="entry name" value="hemH"/>
    <property type="match status" value="1"/>
</dbReference>
<dbReference type="PANTHER" id="PTHR11108">
    <property type="entry name" value="FERROCHELATASE"/>
    <property type="match status" value="1"/>
</dbReference>
<dbReference type="PANTHER" id="PTHR11108:SF1">
    <property type="entry name" value="FERROCHELATASE, MITOCHONDRIAL"/>
    <property type="match status" value="1"/>
</dbReference>
<dbReference type="Pfam" id="PF00762">
    <property type="entry name" value="Ferrochelatase"/>
    <property type="match status" value="1"/>
</dbReference>
<dbReference type="SUPFAM" id="SSF53800">
    <property type="entry name" value="Chelatase"/>
    <property type="match status" value="1"/>
</dbReference>
<dbReference type="PROSITE" id="PS00534">
    <property type="entry name" value="FERROCHELATASE"/>
    <property type="match status" value="1"/>
</dbReference>
<proteinExistence type="inferred from homology"/>
<comment type="function">
    <text evidence="1">Catalyzes the ferrous insertion into protoporphyrin IX.</text>
</comment>
<comment type="catalytic activity">
    <reaction evidence="1">
        <text>heme b + 2 H(+) = protoporphyrin IX + Fe(2+)</text>
        <dbReference type="Rhea" id="RHEA:22584"/>
        <dbReference type="ChEBI" id="CHEBI:15378"/>
        <dbReference type="ChEBI" id="CHEBI:29033"/>
        <dbReference type="ChEBI" id="CHEBI:57306"/>
        <dbReference type="ChEBI" id="CHEBI:60344"/>
        <dbReference type="EC" id="4.98.1.1"/>
    </reaction>
</comment>
<comment type="pathway">
    <text evidence="1">Porphyrin-containing compound metabolism; protoheme biosynthesis; protoheme from protoporphyrin-IX: step 1/1.</text>
</comment>
<comment type="subcellular location">
    <subcellularLocation>
        <location evidence="1">Cytoplasm</location>
    </subcellularLocation>
</comment>
<comment type="similarity">
    <text evidence="1">Belongs to the ferrochelatase family.</text>
</comment>
<organism>
    <name type="scientific">Coxiella burnetii (strain CbuK_Q154)</name>
    <name type="common">Coxiella burnetii (strain Q154)</name>
    <dbReference type="NCBI Taxonomy" id="434924"/>
    <lineage>
        <taxon>Bacteria</taxon>
        <taxon>Pseudomonadati</taxon>
        <taxon>Pseudomonadota</taxon>
        <taxon>Gammaproteobacteria</taxon>
        <taxon>Legionellales</taxon>
        <taxon>Coxiellaceae</taxon>
        <taxon>Coxiella</taxon>
    </lineage>
</organism>
<protein>
    <recommendedName>
        <fullName evidence="1">Ferrochelatase</fullName>
        <ecNumber evidence="1">4.98.1.1</ecNumber>
    </recommendedName>
    <alternativeName>
        <fullName evidence="1">Heme synthase</fullName>
    </alternativeName>
    <alternativeName>
        <fullName evidence="1">Protoheme ferro-lyase</fullName>
    </alternativeName>
</protein>
<feature type="chain" id="PRO_1000116038" description="Ferrochelatase">
    <location>
        <begin position="1"/>
        <end position="354"/>
    </location>
</feature>
<feature type="binding site" evidence="1">
    <location>
        <position position="204"/>
    </location>
    <ligand>
        <name>Fe cation</name>
        <dbReference type="ChEBI" id="CHEBI:24875"/>
    </ligand>
</feature>
<feature type="binding site" evidence="1">
    <location>
        <position position="306"/>
    </location>
    <ligand>
        <name>Fe cation</name>
        <dbReference type="ChEBI" id="CHEBI:24875"/>
    </ligand>
</feature>
<gene>
    <name evidence="1" type="primary">hemH</name>
    <name type="ordered locus">CbuK_1987</name>
</gene>
<accession>B6J5R6</accession>